<reference key="1">
    <citation type="journal article" date="2008" name="DNA Res.">
        <title>Comparative genome analysis of Lactobacillus reuteri and Lactobacillus fermentum reveal a genomic island for reuterin and cobalamin production.</title>
        <authorList>
            <person name="Morita H."/>
            <person name="Toh H."/>
            <person name="Fukuda S."/>
            <person name="Horikawa H."/>
            <person name="Oshima K."/>
            <person name="Suzuki T."/>
            <person name="Murakami M."/>
            <person name="Hisamatsu S."/>
            <person name="Kato Y."/>
            <person name="Takizawa T."/>
            <person name="Fukuoka H."/>
            <person name="Yoshimura T."/>
            <person name="Itoh K."/>
            <person name="O'Sullivan D.J."/>
            <person name="McKay L.L."/>
            <person name="Ohno H."/>
            <person name="Kikuchi J."/>
            <person name="Masaoka T."/>
            <person name="Hattori M."/>
        </authorList>
    </citation>
    <scope>NUCLEOTIDE SEQUENCE [LARGE SCALE GENOMIC DNA]</scope>
    <source>
        <strain>NBRC 3956 / LMG 18251</strain>
    </source>
</reference>
<protein>
    <recommendedName>
        <fullName evidence="1">Large ribosomal subunit protein uL5</fullName>
    </recommendedName>
    <alternativeName>
        <fullName evidence="2">50S ribosomal protein L5</fullName>
    </alternativeName>
</protein>
<proteinExistence type="inferred from homology"/>
<name>RL5_LIMF3</name>
<dbReference type="EMBL" id="AP008937">
    <property type="protein sequence ID" value="BAG27839.1"/>
    <property type="molecule type" value="Genomic_DNA"/>
</dbReference>
<dbReference type="RefSeq" id="WP_003681594.1">
    <property type="nucleotide sequence ID" value="NC_010610.1"/>
</dbReference>
<dbReference type="SMR" id="B2GDV7"/>
<dbReference type="GeneID" id="83716120"/>
<dbReference type="KEGG" id="lfe:LAF_1503"/>
<dbReference type="eggNOG" id="COG0094">
    <property type="taxonomic scope" value="Bacteria"/>
</dbReference>
<dbReference type="HOGENOM" id="CLU_061015_2_1_9"/>
<dbReference type="Proteomes" id="UP000001697">
    <property type="component" value="Chromosome"/>
</dbReference>
<dbReference type="GO" id="GO:1990904">
    <property type="term" value="C:ribonucleoprotein complex"/>
    <property type="evidence" value="ECO:0007669"/>
    <property type="project" value="UniProtKB-KW"/>
</dbReference>
<dbReference type="GO" id="GO:0005840">
    <property type="term" value="C:ribosome"/>
    <property type="evidence" value="ECO:0007669"/>
    <property type="project" value="UniProtKB-KW"/>
</dbReference>
<dbReference type="GO" id="GO:0019843">
    <property type="term" value="F:rRNA binding"/>
    <property type="evidence" value="ECO:0007669"/>
    <property type="project" value="UniProtKB-UniRule"/>
</dbReference>
<dbReference type="GO" id="GO:0003735">
    <property type="term" value="F:structural constituent of ribosome"/>
    <property type="evidence" value="ECO:0007669"/>
    <property type="project" value="InterPro"/>
</dbReference>
<dbReference type="GO" id="GO:0000049">
    <property type="term" value="F:tRNA binding"/>
    <property type="evidence" value="ECO:0007669"/>
    <property type="project" value="UniProtKB-UniRule"/>
</dbReference>
<dbReference type="GO" id="GO:0006412">
    <property type="term" value="P:translation"/>
    <property type="evidence" value="ECO:0007669"/>
    <property type="project" value="UniProtKB-UniRule"/>
</dbReference>
<dbReference type="FunFam" id="3.30.1440.10:FF:000001">
    <property type="entry name" value="50S ribosomal protein L5"/>
    <property type="match status" value="1"/>
</dbReference>
<dbReference type="Gene3D" id="3.30.1440.10">
    <property type="match status" value="1"/>
</dbReference>
<dbReference type="HAMAP" id="MF_01333_B">
    <property type="entry name" value="Ribosomal_uL5_B"/>
    <property type="match status" value="1"/>
</dbReference>
<dbReference type="InterPro" id="IPR002132">
    <property type="entry name" value="Ribosomal_uL5"/>
</dbReference>
<dbReference type="InterPro" id="IPR020930">
    <property type="entry name" value="Ribosomal_uL5_bac-type"/>
</dbReference>
<dbReference type="InterPro" id="IPR031309">
    <property type="entry name" value="Ribosomal_uL5_C"/>
</dbReference>
<dbReference type="InterPro" id="IPR020929">
    <property type="entry name" value="Ribosomal_uL5_CS"/>
</dbReference>
<dbReference type="InterPro" id="IPR022803">
    <property type="entry name" value="Ribosomal_uL5_dom_sf"/>
</dbReference>
<dbReference type="InterPro" id="IPR031310">
    <property type="entry name" value="Ribosomal_uL5_N"/>
</dbReference>
<dbReference type="NCBIfam" id="NF000585">
    <property type="entry name" value="PRK00010.1"/>
    <property type="match status" value="1"/>
</dbReference>
<dbReference type="PANTHER" id="PTHR11994">
    <property type="entry name" value="60S RIBOSOMAL PROTEIN L11-RELATED"/>
    <property type="match status" value="1"/>
</dbReference>
<dbReference type="Pfam" id="PF00281">
    <property type="entry name" value="Ribosomal_L5"/>
    <property type="match status" value="1"/>
</dbReference>
<dbReference type="Pfam" id="PF00673">
    <property type="entry name" value="Ribosomal_L5_C"/>
    <property type="match status" value="1"/>
</dbReference>
<dbReference type="PIRSF" id="PIRSF002161">
    <property type="entry name" value="Ribosomal_L5"/>
    <property type="match status" value="1"/>
</dbReference>
<dbReference type="SUPFAM" id="SSF55282">
    <property type="entry name" value="RL5-like"/>
    <property type="match status" value="1"/>
</dbReference>
<dbReference type="PROSITE" id="PS00358">
    <property type="entry name" value="RIBOSOMAL_L5"/>
    <property type="match status" value="1"/>
</dbReference>
<gene>
    <name evidence="1" type="primary">rplE</name>
    <name type="ordered locus">LAF_1503</name>
</gene>
<accession>B2GDV7</accession>
<feature type="chain" id="PRO_1000142416" description="Large ribosomal subunit protein uL5">
    <location>
        <begin position="1"/>
        <end position="180"/>
    </location>
</feature>
<evidence type="ECO:0000255" key="1">
    <source>
        <dbReference type="HAMAP-Rule" id="MF_01333"/>
    </source>
</evidence>
<evidence type="ECO:0000305" key="2"/>
<comment type="function">
    <text evidence="1">This is one of the proteins that bind and probably mediate the attachment of the 5S RNA into the large ribosomal subunit, where it forms part of the central protuberance. In the 70S ribosome it contacts protein S13 of the 30S subunit (bridge B1b), connecting the 2 subunits; this bridge is implicated in subunit movement. Contacts the P site tRNA; the 5S rRNA and some of its associated proteins might help stabilize positioning of ribosome-bound tRNAs.</text>
</comment>
<comment type="subunit">
    <text evidence="1">Part of the 50S ribosomal subunit; part of the 5S rRNA/L5/L18/L25 subcomplex. Contacts the 5S rRNA and the P site tRNA. Forms a bridge to the 30S subunit in the 70S ribosome.</text>
</comment>
<comment type="similarity">
    <text evidence="1">Belongs to the universal ribosomal protein uL5 family.</text>
</comment>
<organism>
    <name type="scientific">Limosilactobacillus fermentum (strain NBRC 3956 / LMG 18251)</name>
    <name type="common">Lactobacillus fermentum</name>
    <dbReference type="NCBI Taxonomy" id="334390"/>
    <lineage>
        <taxon>Bacteria</taxon>
        <taxon>Bacillati</taxon>
        <taxon>Bacillota</taxon>
        <taxon>Bacilli</taxon>
        <taxon>Lactobacillales</taxon>
        <taxon>Lactobacillaceae</taxon>
        <taxon>Limosilactobacillus</taxon>
    </lineage>
</organism>
<keyword id="KW-1185">Reference proteome</keyword>
<keyword id="KW-0687">Ribonucleoprotein</keyword>
<keyword id="KW-0689">Ribosomal protein</keyword>
<keyword id="KW-0694">RNA-binding</keyword>
<keyword id="KW-0699">rRNA-binding</keyword>
<keyword id="KW-0820">tRNA-binding</keyword>
<sequence length="180" mass="20091">MENRLKAKYENEVRPSLIEKFDYSSVMAAPKLEKIVLNMGVGDATQNSKNLDEAVEELGLISGQKPLITKAKKSIAGFRLREGMAIGAKVTLRGTRMYDFLDKLVNVSLPRVRDFRGVSNKAFDGRGNYTLGVREQLIFPEIDYDNVNRVRGLDIVIVTTANSDEEAHELLAQLGMPFAK</sequence>